<organism>
    <name type="scientific">Mycobacterium leprae (strain TN)</name>
    <dbReference type="NCBI Taxonomy" id="272631"/>
    <lineage>
        <taxon>Bacteria</taxon>
        <taxon>Bacillati</taxon>
        <taxon>Actinomycetota</taxon>
        <taxon>Actinomycetes</taxon>
        <taxon>Mycobacteriales</taxon>
        <taxon>Mycobacteriaceae</taxon>
        <taxon>Mycobacterium</taxon>
    </lineage>
</organism>
<keyword id="KW-1003">Cell membrane</keyword>
<keyword id="KW-0342">GTP-binding</keyword>
<keyword id="KW-0378">Hydrolase</keyword>
<keyword id="KW-0472">Membrane</keyword>
<keyword id="KW-0547">Nucleotide-binding</keyword>
<keyword id="KW-0648">Protein biosynthesis</keyword>
<keyword id="KW-1185">Reference proteome</keyword>
<evidence type="ECO:0000255" key="1">
    <source>
        <dbReference type="HAMAP-Rule" id="MF_00071"/>
    </source>
</evidence>
<reference key="1">
    <citation type="submission" date="1994-03" db="EMBL/GenBank/DDBJ databases">
        <authorList>
            <person name="Smith D.R."/>
            <person name="Robison K."/>
        </authorList>
    </citation>
    <scope>NUCLEOTIDE SEQUENCE [GENOMIC DNA]</scope>
</reference>
<reference key="2">
    <citation type="journal article" date="2001" name="Nature">
        <title>Massive gene decay in the leprosy bacillus.</title>
        <authorList>
            <person name="Cole S.T."/>
            <person name="Eiglmeier K."/>
            <person name="Parkhill J."/>
            <person name="James K.D."/>
            <person name="Thomson N.R."/>
            <person name="Wheeler P.R."/>
            <person name="Honore N."/>
            <person name="Garnier T."/>
            <person name="Churcher C.M."/>
            <person name="Harris D.E."/>
            <person name="Mungall K.L."/>
            <person name="Basham D."/>
            <person name="Brown D."/>
            <person name="Chillingworth T."/>
            <person name="Connor R."/>
            <person name="Davies R.M."/>
            <person name="Devlin K."/>
            <person name="Duthoy S."/>
            <person name="Feltwell T."/>
            <person name="Fraser A."/>
            <person name="Hamlin N."/>
            <person name="Holroyd S."/>
            <person name="Hornsby T."/>
            <person name="Jagels K."/>
            <person name="Lacroix C."/>
            <person name="Maclean J."/>
            <person name="Moule S."/>
            <person name="Murphy L.D."/>
            <person name="Oliver K."/>
            <person name="Quail M.A."/>
            <person name="Rajandream M.A."/>
            <person name="Rutherford K.M."/>
            <person name="Rutter S."/>
            <person name="Seeger K."/>
            <person name="Simon S."/>
            <person name="Simmonds M."/>
            <person name="Skelton J."/>
            <person name="Squares R."/>
            <person name="Squares S."/>
            <person name="Stevens K."/>
            <person name="Taylor K."/>
            <person name="Whitehead S."/>
            <person name="Woodward J.R."/>
            <person name="Barrell B.G."/>
        </authorList>
    </citation>
    <scope>NUCLEOTIDE SEQUENCE [LARGE SCALE GENOMIC DNA]</scope>
    <source>
        <strain>TN</strain>
    </source>
</reference>
<dbReference type="EC" id="3.6.5.n1" evidence="1"/>
<dbReference type="EMBL" id="U00016">
    <property type="protein sequence ID" value="AAA17177.1"/>
    <property type="molecule type" value="Genomic_DNA"/>
</dbReference>
<dbReference type="EMBL" id="AL583919">
    <property type="protein sequence ID" value="CAC30119.1"/>
    <property type="molecule type" value="Genomic_DNA"/>
</dbReference>
<dbReference type="PIR" id="S72609">
    <property type="entry name" value="S72609"/>
</dbReference>
<dbReference type="RefSeq" id="NP_301513.1">
    <property type="nucleotide sequence ID" value="NC_002677.1"/>
</dbReference>
<dbReference type="RefSeq" id="WP_010907837.1">
    <property type="nucleotide sequence ID" value="NC_002677.1"/>
</dbReference>
<dbReference type="SMR" id="P53530"/>
<dbReference type="STRING" id="272631.gene:17574432"/>
<dbReference type="KEGG" id="mle:ML0611"/>
<dbReference type="PATRIC" id="fig|272631.5.peg.1072"/>
<dbReference type="Leproma" id="ML0611"/>
<dbReference type="eggNOG" id="COG0481">
    <property type="taxonomic scope" value="Bacteria"/>
</dbReference>
<dbReference type="HOGENOM" id="CLU_009995_3_3_11"/>
<dbReference type="OrthoDB" id="9801472at2"/>
<dbReference type="Proteomes" id="UP000000806">
    <property type="component" value="Chromosome"/>
</dbReference>
<dbReference type="GO" id="GO:0005886">
    <property type="term" value="C:plasma membrane"/>
    <property type="evidence" value="ECO:0007669"/>
    <property type="project" value="UniProtKB-SubCell"/>
</dbReference>
<dbReference type="GO" id="GO:0005525">
    <property type="term" value="F:GTP binding"/>
    <property type="evidence" value="ECO:0007669"/>
    <property type="project" value="UniProtKB-UniRule"/>
</dbReference>
<dbReference type="GO" id="GO:0003924">
    <property type="term" value="F:GTPase activity"/>
    <property type="evidence" value="ECO:0007669"/>
    <property type="project" value="UniProtKB-UniRule"/>
</dbReference>
<dbReference type="GO" id="GO:0043022">
    <property type="term" value="F:ribosome binding"/>
    <property type="evidence" value="ECO:0007669"/>
    <property type="project" value="UniProtKB-UniRule"/>
</dbReference>
<dbReference type="GO" id="GO:0003746">
    <property type="term" value="F:translation elongation factor activity"/>
    <property type="evidence" value="ECO:0007669"/>
    <property type="project" value="UniProtKB-UniRule"/>
</dbReference>
<dbReference type="GO" id="GO:0045727">
    <property type="term" value="P:positive regulation of translation"/>
    <property type="evidence" value="ECO:0007669"/>
    <property type="project" value="UniProtKB-UniRule"/>
</dbReference>
<dbReference type="CDD" id="cd03699">
    <property type="entry name" value="EF4_II"/>
    <property type="match status" value="1"/>
</dbReference>
<dbReference type="CDD" id="cd16260">
    <property type="entry name" value="EF4_III"/>
    <property type="match status" value="1"/>
</dbReference>
<dbReference type="CDD" id="cd01890">
    <property type="entry name" value="LepA"/>
    <property type="match status" value="1"/>
</dbReference>
<dbReference type="CDD" id="cd03709">
    <property type="entry name" value="lepA_C"/>
    <property type="match status" value="1"/>
</dbReference>
<dbReference type="FunFam" id="3.30.70.240:FF:000011">
    <property type="entry name" value="Elongation factor 4"/>
    <property type="match status" value="1"/>
</dbReference>
<dbReference type="FunFam" id="3.40.50.300:FF:000078">
    <property type="entry name" value="Elongation factor 4"/>
    <property type="match status" value="1"/>
</dbReference>
<dbReference type="FunFam" id="2.40.30.10:FF:000015">
    <property type="entry name" value="Translation factor GUF1, mitochondrial"/>
    <property type="match status" value="1"/>
</dbReference>
<dbReference type="FunFam" id="3.30.70.2570:FF:000001">
    <property type="entry name" value="Translation factor GUF1, mitochondrial"/>
    <property type="match status" value="1"/>
</dbReference>
<dbReference type="FunFam" id="3.30.70.870:FF:000004">
    <property type="entry name" value="Translation factor GUF1, mitochondrial"/>
    <property type="match status" value="1"/>
</dbReference>
<dbReference type="Gene3D" id="3.30.70.240">
    <property type="match status" value="1"/>
</dbReference>
<dbReference type="Gene3D" id="3.30.70.2570">
    <property type="entry name" value="Elongation factor 4, C-terminal domain"/>
    <property type="match status" value="1"/>
</dbReference>
<dbReference type="Gene3D" id="3.30.70.870">
    <property type="entry name" value="Elongation Factor G (Translational Gtpase), domain 3"/>
    <property type="match status" value="1"/>
</dbReference>
<dbReference type="Gene3D" id="3.40.50.300">
    <property type="entry name" value="P-loop containing nucleotide triphosphate hydrolases"/>
    <property type="match status" value="1"/>
</dbReference>
<dbReference type="Gene3D" id="2.40.30.10">
    <property type="entry name" value="Translation factors"/>
    <property type="match status" value="1"/>
</dbReference>
<dbReference type="HAMAP" id="MF_00071">
    <property type="entry name" value="LepA"/>
    <property type="match status" value="1"/>
</dbReference>
<dbReference type="InterPro" id="IPR006297">
    <property type="entry name" value="EF-4"/>
</dbReference>
<dbReference type="InterPro" id="IPR035647">
    <property type="entry name" value="EFG_III/V"/>
</dbReference>
<dbReference type="InterPro" id="IPR000640">
    <property type="entry name" value="EFG_V-like"/>
</dbReference>
<dbReference type="InterPro" id="IPR031157">
    <property type="entry name" value="G_TR_CS"/>
</dbReference>
<dbReference type="InterPro" id="IPR038363">
    <property type="entry name" value="LepA_C_sf"/>
</dbReference>
<dbReference type="InterPro" id="IPR013842">
    <property type="entry name" value="LepA_CTD"/>
</dbReference>
<dbReference type="InterPro" id="IPR035654">
    <property type="entry name" value="LepA_IV"/>
</dbReference>
<dbReference type="InterPro" id="IPR027417">
    <property type="entry name" value="P-loop_NTPase"/>
</dbReference>
<dbReference type="InterPro" id="IPR005225">
    <property type="entry name" value="Small_GTP-bd"/>
</dbReference>
<dbReference type="InterPro" id="IPR000795">
    <property type="entry name" value="T_Tr_GTP-bd_dom"/>
</dbReference>
<dbReference type="InterPro" id="IPR009000">
    <property type="entry name" value="Transl_B-barrel_sf"/>
</dbReference>
<dbReference type="NCBIfam" id="TIGR01393">
    <property type="entry name" value="lepA"/>
    <property type="match status" value="1"/>
</dbReference>
<dbReference type="NCBIfam" id="TIGR00231">
    <property type="entry name" value="small_GTP"/>
    <property type="match status" value="1"/>
</dbReference>
<dbReference type="PANTHER" id="PTHR43512:SF4">
    <property type="entry name" value="TRANSLATION FACTOR GUF1 HOMOLOG, CHLOROPLASTIC"/>
    <property type="match status" value="1"/>
</dbReference>
<dbReference type="PANTHER" id="PTHR43512">
    <property type="entry name" value="TRANSLATION FACTOR GUF1-RELATED"/>
    <property type="match status" value="1"/>
</dbReference>
<dbReference type="Pfam" id="PF00679">
    <property type="entry name" value="EFG_C"/>
    <property type="match status" value="1"/>
</dbReference>
<dbReference type="Pfam" id="PF00009">
    <property type="entry name" value="GTP_EFTU"/>
    <property type="match status" value="1"/>
</dbReference>
<dbReference type="Pfam" id="PF06421">
    <property type="entry name" value="LepA_C"/>
    <property type="match status" value="1"/>
</dbReference>
<dbReference type="PRINTS" id="PR00315">
    <property type="entry name" value="ELONGATNFCT"/>
</dbReference>
<dbReference type="SMART" id="SM00838">
    <property type="entry name" value="EFG_C"/>
    <property type="match status" value="1"/>
</dbReference>
<dbReference type="SUPFAM" id="SSF54980">
    <property type="entry name" value="EF-G C-terminal domain-like"/>
    <property type="match status" value="2"/>
</dbReference>
<dbReference type="SUPFAM" id="SSF52540">
    <property type="entry name" value="P-loop containing nucleoside triphosphate hydrolases"/>
    <property type="match status" value="1"/>
</dbReference>
<dbReference type="SUPFAM" id="SSF50447">
    <property type="entry name" value="Translation proteins"/>
    <property type="match status" value="1"/>
</dbReference>
<dbReference type="PROSITE" id="PS00301">
    <property type="entry name" value="G_TR_1"/>
    <property type="match status" value="1"/>
</dbReference>
<dbReference type="PROSITE" id="PS51722">
    <property type="entry name" value="G_TR_2"/>
    <property type="match status" value="1"/>
</dbReference>
<accession>P53530</accession>
<comment type="function">
    <text evidence="1">Required for accurate and efficient protein synthesis under certain stress conditions. May act as a fidelity factor of the translation reaction, by catalyzing a one-codon backward translocation of tRNAs on improperly translocated ribosomes. Back-translocation proceeds from a post-translocation (POST) complex to a pre-translocation (PRE) complex, thus giving elongation factor G a second chance to translocate the tRNAs correctly. Binds to ribosomes in a GTP-dependent manner.</text>
</comment>
<comment type="catalytic activity">
    <reaction evidence="1">
        <text>GTP + H2O = GDP + phosphate + H(+)</text>
        <dbReference type="Rhea" id="RHEA:19669"/>
        <dbReference type="ChEBI" id="CHEBI:15377"/>
        <dbReference type="ChEBI" id="CHEBI:15378"/>
        <dbReference type="ChEBI" id="CHEBI:37565"/>
        <dbReference type="ChEBI" id="CHEBI:43474"/>
        <dbReference type="ChEBI" id="CHEBI:58189"/>
        <dbReference type="EC" id="3.6.5.n1"/>
    </reaction>
</comment>
<comment type="subcellular location">
    <subcellularLocation>
        <location evidence="1">Cell membrane</location>
        <topology evidence="1">Peripheral membrane protein</topology>
        <orientation evidence="1">Cytoplasmic side</orientation>
    </subcellularLocation>
</comment>
<comment type="miscellaneous">
    <text>The overproduction of this protein is lethal to M.leprae.</text>
</comment>
<comment type="similarity">
    <text evidence="1">Belongs to the TRAFAC class translation factor GTPase superfamily. Classic translation factor GTPase family. LepA subfamily.</text>
</comment>
<protein>
    <recommendedName>
        <fullName evidence="1">Elongation factor 4</fullName>
        <shortName evidence="1">EF-4</shortName>
        <ecNumber evidence="1">3.6.5.n1</ecNumber>
    </recommendedName>
    <alternativeName>
        <fullName evidence="1">Ribosomal back-translocase LepA</fullName>
    </alternativeName>
</protein>
<feature type="chain" id="PRO_0000176300" description="Elongation factor 4">
    <location>
        <begin position="1"/>
        <end position="646"/>
    </location>
</feature>
<feature type="domain" description="tr-type G">
    <location>
        <begin position="42"/>
        <end position="227"/>
    </location>
</feature>
<feature type="binding site" evidence="1">
    <location>
        <begin position="54"/>
        <end position="59"/>
    </location>
    <ligand>
        <name>GTP</name>
        <dbReference type="ChEBI" id="CHEBI:37565"/>
    </ligand>
</feature>
<feature type="binding site" evidence="1">
    <location>
        <begin position="174"/>
        <end position="177"/>
    </location>
    <ligand>
        <name>GTP</name>
        <dbReference type="ChEBI" id="CHEBI:37565"/>
    </ligand>
</feature>
<proteinExistence type="inferred from homology"/>
<sequence>MSWSLRVDKPDTGESPFKHSLVTGAQEIPISSFADKTFTAPAQIRNFCIIAHIDHGKSTLADRMLQLTGVVDERSMRAQYLDRMDIERERGITIKAQNVRLSWSVTAGGTTENYVLHLIDTPGHVDFTYEVSRALEACEGAVLLVDAVQGIEAQTLANLYLALERDLTIIPVLNKIDLPAADPDRYAAEIAHIIGYESGDVLRVSGKTGEGVSDLLDEVVRRVPHPQGDPDAPTRAMIFDSVYDIYRGVVTYVRVVDGKISPRERIAMMSTGATYELLEVGIVSPEPKASAGLGVGEVGYLITGVKDVRQSKVGDTVTTVRYGATEPLTGYREPKPMVYSGLYPVDSSDYPSLRDALGKLQLNDAALTYEPETSVALGVGYRCGFLGLLHIDITRERLEREFDLDLISTSPNVVYRVVTEDNTEIVVTNPSDWPEGKIRTVYEPVVKITIIAPSEFIGTIMELCQSRRGELGGMDYLSPERVELRYIMPLGEIIFDFFDSLKSRTRGYASLDYEEAGEQEAQLVKVDILLQGEAVDAFSAIVHKDSASAYGNKMTNKLKELIPRQQFEVPVQAAIGSKVIARENIRAIRKDVLSKCYGGDITRKRKLLEKQKEGKKRMKTIGRVEVPQEAFVAALSADAAGDKDKK</sequence>
<gene>
    <name evidence="1" type="primary">lepA</name>
    <name type="ordered locus">ML0611</name>
    <name type="ORF">B1937_F3_81</name>
</gene>
<name>LEPA_MYCLE</name>